<proteinExistence type="inferred from homology"/>
<dbReference type="EC" id="3.4.24.-" evidence="1"/>
<dbReference type="EMBL" id="U61844">
    <property type="protein sequence ID" value="AAB41679.1"/>
    <property type="molecule type" value="Genomic_DNA"/>
</dbReference>
<dbReference type="EMBL" id="CP001878">
    <property type="protein sequence ID" value="ADC49723.1"/>
    <property type="molecule type" value="Genomic_DNA"/>
</dbReference>
<dbReference type="RefSeq" id="WP_012957092.1">
    <property type="nucleotide sequence ID" value="NC_013791.2"/>
</dbReference>
<dbReference type="SMR" id="P94304"/>
<dbReference type="STRING" id="398511.BpOF4_08325"/>
<dbReference type="MEROPS" id="M41.009"/>
<dbReference type="KEGG" id="bpf:BpOF4_08325"/>
<dbReference type="eggNOG" id="COG0465">
    <property type="taxonomic scope" value="Bacteria"/>
</dbReference>
<dbReference type="HOGENOM" id="CLU_000688_16_2_9"/>
<dbReference type="Proteomes" id="UP000001544">
    <property type="component" value="Chromosome"/>
</dbReference>
<dbReference type="GO" id="GO:0005886">
    <property type="term" value="C:plasma membrane"/>
    <property type="evidence" value="ECO:0007669"/>
    <property type="project" value="UniProtKB-SubCell"/>
</dbReference>
<dbReference type="GO" id="GO:0005524">
    <property type="term" value="F:ATP binding"/>
    <property type="evidence" value="ECO:0007669"/>
    <property type="project" value="UniProtKB-UniRule"/>
</dbReference>
<dbReference type="GO" id="GO:0016887">
    <property type="term" value="F:ATP hydrolysis activity"/>
    <property type="evidence" value="ECO:0007669"/>
    <property type="project" value="UniProtKB-UniRule"/>
</dbReference>
<dbReference type="GO" id="GO:0004176">
    <property type="term" value="F:ATP-dependent peptidase activity"/>
    <property type="evidence" value="ECO:0007669"/>
    <property type="project" value="InterPro"/>
</dbReference>
<dbReference type="GO" id="GO:0004222">
    <property type="term" value="F:metalloendopeptidase activity"/>
    <property type="evidence" value="ECO:0007669"/>
    <property type="project" value="InterPro"/>
</dbReference>
<dbReference type="GO" id="GO:0008270">
    <property type="term" value="F:zinc ion binding"/>
    <property type="evidence" value="ECO:0007669"/>
    <property type="project" value="UniProtKB-UniRule"/>
</dbReference>
<dbReference type="GO" id="GO:0030163">
    <property type="term" value="P:protein catabolic process"/>
    <property type="evidence" value="ECO:0007669"/>
    <property type="project" value="UniProtKB-UniRule"/>
</dbReference>
<dbReference type="GO" id="GO:0006508">
    <property type="term" value="P:proteolysis"/>
    <property type="evidence" value="ECO:0007669"/>
    <property type="project" value="UniProtKB-KW"/>
</dbReference>
<dbReference type="CDD" id="cd19501">
    <property type="entry name" value="RecA-like_FtsH"/>
    <property type="match status" value="1"/>
</dbReference>
<dbReference type="FunFam" id="1.10.8.60:FF:000001">
    <property type="entry name" value="ATP-dependent zinc metalloprotease FtsH"/>
    <property type="match status" value="1"/>
</dbReference>
<dbReference type="FunFam" id="1.20.58.760:FF:000001">
    <property type="entry name" value="ATP-dependent zinc metalloprotease FtsH"/>
    <property type="match status" value="1"/>
</dbReference>
<dbReference type="FunFam" id="3.40.50.300:FF:000001">
    <property type="entry name" value="ATP-dependent zinc metalloprotease FtsH"/>
    <property type="match status" value="1"/>
</dbReference>
<dbReference type="Gene3D" id="1.10.8.60">
    <property type="match status" value="1"/>
</dbReference>
<dbReference type="Gene3D" id="3.40.50.300">
    <property type="entry name" value="P-loop containing nucleotide triphosphate hydrolases"/>
    <property type="match status" value="1"/>
</dbReference>
<dbReference type="Gene3D" id="1.20.58.760">
    <property type="entry name" value="Peptidase M41"/>
    <property type="match status" value="1"/>
</dbReference>
<dbReference type="HAMAP" id="MF_01458">
    <property type="entry name" value="FtsH"/>
    <property type="match status" value="1"/>
</dbReference>
<dbReference type="InterPro" id="IPR003593">
    <property type="entry name" value="AAA+_ATPase"/>
</dbReference>
<dbReference type="InterPro" id="IPR041569">
    <property type="entry name" value="AAA_lid_3"/>
</dbReference>
<dbReference type="InterPro" id="IPR003959">
    <property type="entry name" value="ATPase_AAA_core"/>
</dbReference>
<dbReference type="InterPro" id="IPR003960">
    <property type="entry name" value="ATPase_AAA_CS"/>
</dbReference>
<dbReference type="InterPro" id="IPR005936">
    <property type="entry name" value="FtsH"/>
</dbReference>
<dbReference type="InterPro" id="IPR027417">
    <property type="entry name" value="P-loop_NTPase"/>
</dbReference>
<dbReference type="InterPro" id="IPR011546">
    <property type="entry name" value="Pept_M41_FtsH_extracell"/>
</dbReference>
<dbReference type="InterPro" id="IPR000642">
    <property type="entry name" value="Peptidase_M41"/>
</dbReference>
<dbReference type="InterPro" id="IPR037219">
    <property type="entry name" value="Peptidase_M41-like"/>
</dbReference>
<dbReference type="NCBIfam" id="TIGR01241">
    <property type="entry name" value="FtsH_fam"/>
    <property type="match status" value="1"/>
</dbReference>
<dbReference type="PANTHER" id="PTHR23076:SF113">
    <property type="entry name" value="ATP-DEPENDENT ZINC METALLOPROTEASE FTSH 1, CHLOROPLASTIC-RELATED"/>
    <property type="match status" value="1"/>
</dbReference>
<dbReference type="PANTHER" id="PTHR23076">
    <property type="entry name" value="METALLOPROTEASE M41 FTSH"/>
    <property type="match status" value="1"/>
</dbReference>
<dbReference type="Pfam" id="PF00004">
    <property type="entry name" value="AAA"/>
    <property type="match status" value="1"/>
</dbReference>
<dbReference type="Pfam" id="PF17862">
    <property type="entry name" value="AAA_lid_3"/>
    <property type="match status" value="1"/>
</dbReference>
<dbReference type="Pfam" id="PF06480">
    <property type="entry name" value="FtsH_ext"/>
    <property type="match status" value="1"/>
</dbReference>
<dbReference type="Pfam" id="PF01434">
    <property type="entry name" value="Peptidase_M41"/>
    <property type="match status" value="1"/>
</dbReference>
<dbReference type="SMART" id="SM00382">
    <property type="entry name" value="AAA"/>
    <property type="match status" value="1"/>
</dbReference>
<dbReference type="SUPFAM" id="SSF140990">
    <property type="entry name" value="FtsH protease domain-like"/>
    <property type="match status" value="1"/>
</dbReference>
<dbReference type="SUPFAM" id="SSF52540">
    <property type="entry name" value="P-loop containing nucleoside triphosphate hydrolases"/>
    <property type="match status" value="1"/>
</dbReference>
<dbReference type="PROSITE" id="PS00674">
    <property type="entry name" value="AAA"/>
    <property type="match status" value="1"/>
</dbReference>
<name>FTSH_ALKPO</name>
<gene>
    <name evidence="1" type="primary">ftsH</name>
    <name type="ordered locus">BpOF4_08325</name>
</gene>
<keyword id="KW-0067">ATP-binding</keyword>
<keyword id="KW-1003">Cell membrane</keyword>
<keyword id="KW-0378">Hydrolase</keyword>
<keyword id="KW-0472">Membrane</keyword>
<keyword id="KW-0479">Metal-binding</keyword>
<keyword id="KW-0482">Metalloprotease</keyword>
<keyword id="KW-0547">Nucleotide-binding</keyword>
<keyword id="KW-0645">Protease</keyword>
<keyword id="KW-1185">Reference proteome</keyword>
<keyword id="KW-0812">Transmembrane</keyword>
<keyword id="KW-1133">Transmembrane helix</keyword>
<keyword id="KW-0862">Zinc</keyword>
<evidence type="ECO:0000255" key="1">
    <source>
        <dbReference type="HAMAP-Rule" id="MF_01458"/>
    </source>
</evidence>
<evidence type="ECO:0000256" key="2">
    <source>
        <dbReference type="SAM" id="MobiDB-lite"/>
    </source>
</evidence>
<evidence type="ECO:0000305" key="3"/>
<feature type="chain" id="PRO_0000084626" description="ATP-dependent zinc metalloprotease FtsH">
    <location>
        <begin position="1"/>
        <end position="679"/>
    </location>
</feature>
<feature type="topological domain" description="Cytoplasmic" evidence="1">
    <location>
        <begin position="1"/>
        <end position="6"/>
    </location>
</feature>
<feature type="transmembrane region" description="Helical" evidence="1">
    <location>
        <begin position="7"/>
        <end position="27"/>
    </location>
</feature>
<feature type="topological domain" description="Extracellular" evidence="1">
    <location>
        <begin position="28"/>
        <end position="114"/>
    </location>
</feature>
<feature type="transmembrane region" description="Helical" evidence="1">
    <location>
        <begin position="115"/>
        <end position="135"/>
    </location>
</feature>
<feature type="topological domain" description="Cytoplasmic" evidence="1">
    <location>
        <begin position="136"/>
        <end position="679"/>
    </location>
</feature>
<feature type="region of interest" description="Disordered" evidence="2">
    <location>
        <begin position="621"/>
        <end position="679"/>
    </location>
</feature>
<feature type="compositionally biased region" description="Basic and acidic residues" evidence="2">
    <location>
        <begin position="621"/>
        <end position="642"/>
    </location>
</feature>
<feature type="compositionally biased region" description="Basic and acidic residues" evidence="2">
    <location>
        <begin position="658"/>
        <end position="679"/>
    </location>
</feature>
<feature type="active site" evidence="1">
    <location>
        <position position="429"/>
    </location>
</feature>
<feature type="binding site" evidence="1">
    <location>
        <begin position="206"/>
        <end position="213"/>
    </location>
    <ligand>
        <name>ATP</name>
        <dbReference type="ChEBI" id="CHEBI:30616"/>
    </ligand>
</feature>
<feature type="binding site" evidence="1">
    <location>
        <position position="428"/>
    </location>
    <ligand>
        <name>Zn(2+)</name>
        <dbReference type="ChEBI" id="CHEBI:29105"/>
        <note>catalytic</note>
    </ligand>
</feature>
<feature type="binding site" evidence="1">
    <location>
        <position position="432"/>
    </location>
    <ligand>
        <name>Zn(2+)</name>
        <dbReference type="ChEBI" id="CHEBI:29105"/>
        <note>catalytic</note>
    </ligand>
</feature>
<feature type="binding site" evidence="1">
    <location>
        <position position="504"/>
    </location>
    <ligand>
        <name>Zn(2+)</name>
        <dbReference type="ChEBI" id="CHEBI:29105"/>
        <note>catalytic</note>
    </ligand>
</feature>
<feature type="sequence conflict" description="In Ref. 1; AAB41679." evidence="3" ref="1">
    <original>L</original>
    <variation>P</variation>
    <location>
        <position position="621"/>
    </location>
</feature>
<sequence>MNRIFRNTIFYLLIFLVIVGIVSVFNSDQTETENVSFNEFAERLENGQVQELSVKPERQVYLVRGQFNDQAEDEFFQTYALRSEQTAELLFNAEDPTGTPFNLEIEPADETSGWVQFFTGIIPFIIIFILFFFLLSQAQGGGSRVMNFGKSKAKMVNEDKKKAKFKDVAGADEEKQELVEVVEFLKDPRKFSAIGARIPKGVLLVGPPGTGKTLLARAVAGEAGVPFFSISGSDFVEMFVGVGASRVRDLFENAKKNAPCIIFIDEIDAVGRQRGAGLGGGHDEREQTLNQLLVEMDGFSANEGIIIIAATNRADILDPALLRPGRFDRQIQVNRPDVNGREEVLKVHARNKPLNDDVNLKTIATRTPGFSGADLENLLNEAALVAARHDHTKISMIHIEEAIDRVIAGPAKKSRVISPKEKKIVAWHEAGHTVVGVKLENADMVHKVTIVPRGMAGGYAVMLPKEDRYFMTQPELLDKIIGLLGGRVAEEVTFGEVSTGAHNDFQRATGIARKMVTEYGMSEKLGPMQFISGSGGQVFLGRDIQNEQNYSDAIAHEIDLEVQRIIKECYARCKQILLENKDSLDLVAKTLLDMETLDAEQIKSLVHEGKLPDDHHLNAHLEKEKASESDVKVNINSKKEETPQVEAEQPQEPNTDEPIEKDPSVEDNRSFEDDTNKKE</sequence>
<organism>
    <name type="scientific">Alkalihalophilus pseudofirmus (strain ATCC BAA-2126 / JCM 17055 / OF4)</name>
    <name type="common">Bacillus pseudofirmus</name>
    <dbReference type="NCBI Taxonomy" id="398511"/>
    <lineage>
        <taxon>Bacteria</taxon>
        <taxon>Bacillati</taxon>
        <taxon>Bacillota</taxon>
        <taxon>Bacilli</taxon>
        <taxon>Bacillales</taxon>
        <taxon>Bacillaceae</taxon>
        <taxon>Alkalihalophilus</taxon>
    </lineage>
</organism>
<protein>
    <recommendedName>
        <fullName evidence="1">ATP-dependent zinc metalloprotease FtsH</fullName>
        <ecNumber evidence="1">3.4.24.-</ecNumber>
    </recommendedName>
</protein>
<comment type="function">
    <text evidence="1">Acts as a processive, ATP-dependent zinc metallopeptidase for both cytoplasmic and membrane proteins. Plays a role in the quality control of integral membrane proteins.</text>
</comment>
<comment type="cofactor">
    <cofactor evidence="1">
        <name>Zn(2+)</name>
        <dbReference type="ChEBI" id="CHEBI:29105"/>
    </cofactor>
    <text evidence="1">Binds 1 zinc ion per subunit.</text>
</comment>
<comment type="subunit">
    <text evidence="1">Homohexamer.</text>
</comment>
<comment type="subcellular location">
    <subcellularLocation>
        <location evidence="1">Cell membrane</location>
        <topology evidence="1">Multi-pass membrane protein</topology>
        <orientation evidence="1">Cytoplasmic side</orientation>
    </subcellularLocation>
</comment>
<comment type="similarity">
    <text evidence="1">In the central section; belongs to the AAA ATPase family.</text>
</comment>
<comment type="similarity">
    <text evidence="1">In the C-terminal section; belongs to the peptidase M41 family.</text>
</comment>
<reference key="1">
    <citation type="journal article" date="1997" name="Extremophiles">
        <title>Diverse genes of alkaliphilic Bacillus firmus OF4 that complement K+-uptake-deficient Escherichia coli include an ftsH homologue.</title>
        <authorList>
            <person name="Ito M."/>
            <person name="Cooperberg B."/>
            <person name="Krulwich T.A."/>
        </authorList>
    </citation>
    <scope>NUCLEOTIDE SEQUENCE [GENOMIC DNA]</scope>
</reference>
<reference key="2">
    <citation type="journal article" date="2011" name="Environ. Microbiol.">
        <title>Genome of alkaliphilic Bacillus pseudofirmus OF4 reveals adaptations that support the ability to grow in an external pH range from 7.5 to 11.4.</title>
        <authorList>
            <person name="Janto B."/>
            <person name="Ahmed A."/>
            <person name="Ito M."/>
            <person name="Liu J."/>
            <person name="Hicks D.B."/>
            <person name="Pagni S."/>
            <person name="Fackelmayer O.J."/>
            <person name="Smith T.A."/>
            <person name="Earl J."/>
            <person name="Elbourne L.D."/>
            <person name="Hassan K."/>
            <person name="Paulsen I.T."/>
            <person name="Kolsto A.B."/>
            <person name="Tourasse N.J."/>
            <person name="Ehrlich G.D."/>
            <person name="Boissy R."/>
            <person name="Ivey D.M."/>
            <person name="Li G."/>
            <person name="Xue Y."/>
            <person name="Ma Y."/>
            <person name="Hu F.Z."/>
            <person name="Krulwich T.A."/>
        </authorList>
    </citation>
    <scope>NUCLEOTIDE SEQUENCE [LARGE SCALE GENOMIC DNA]</scope>
    <source>
        <strain>ATCC BAA-2126 / JCM 17055 / OF4</strain>
    </source>
</reference>
<accession>P94304</accession>
<accession>D3FR27</accession>